<organism>
    <name type="scientific">Rhodopseudomonas palustris (strain BisB18)</name>
    <dbReference type="NCBI Taxonomy" id="316056"/>
    <lineage>
        <taxon>Bacteria</taxon>
        <taxon>Pseudomonadati</taxon>
        <taxon>Pseudomonadota</taxon>
        <taxon>Alphaproteobacteria</taxon>
        <taxon>Hyphomicrobiales</taxon>
        <taxon>Nitrobacteraceae</taxon>
        <taxon>Rhodopseudomonas</taxon>
    </lineage>
</organism>
<gene>
    <name evidence="1" type="primary">ccmA</name>
    <name type="ordered locus">RPC_0205</name>
</gene>
<reference key="1">
    <citation type="submission" date="2006-03" db="EMBL/GenBank/DDBJ databases">
        <title>Complete sequence of Rhodopseudomonas palustris BisB18.</title>
        <authorList>
            <consortium name="US DOE Joint Genome Institute"/>
            <person name="Copeland A."/>
            <person name="Lucas S."/>
            <person name="Lapidus A."/>
            <person name="Barry K."/>
            <person name="Detter J.C."/>
            <person name="Glavina del Rio T."/>
            <person name="Hammon N."/>
            <person name="Israni S."/>
            <person name="Dalin E."/>
            <person name="Tice H."/>
            <person name="Pitluck S."/>
            <person name="Chain P."/>
            <person name="Malfatti S."/>
            <person name="Shin M."/>
            <person name="Vergez L."/>
            <person name="Schmutz J."/>
            <person name="Larimer F."/>
            <person name="Land M."/>
            <person name="Hauser L."/>
            <person name="Pelletier D.A."/>
            <person name="Kyrpides N."/>
            <person name="Anderson I."/>
            <person name="Oda Y."/>
            <person name="Harwood C.S."/>
            <person name="Richardson P."/>
        </authorList>
    </citation>
    <scope>NUCLEOTIDE SEQUENCE [LARGE SCALE GENOMIC DNA]</scope>
    <source>
        <strain>BisB18</strain>
    </source>
</reference>
<protein>
    <recommendedName>
        <fullName evidence="1">Cytochrome c biogenesis ATP-binding export protein CcmA</fullName>
        <ecNumber evidence="1">7.6.2.5</ecNumber>
    </recommendedName>
    <alternativeName>
        <fullName evidence="1">Heme exporter protein A</fullName>
    </alternativeName>
</protein>
<sequence length="200" mass="20551">MRLTGRGLRCVRGGRQVFAGLDVDAAAGEAVAVVGANGAGKTSLLRLIAGLLALAGGAIALEGGDSELTLAEQAHYLGHRDALKPSLSVAENLIFWQQFLGGEPADAQASLAAVGLGHIAHLPAAYLSAGQRRRLSLARLTAVRRPLWLLDEPTSALDAEGQAMFARLMTAHLESGGLLVAATHTPLGIAARELRIGGAA</sequence>
<proteinExistence type="inferred from homology"/>
<accession>Q21CV6</accession>
<name>CCMA_RHOPB</name>
<keyword id="KW-0067">ATP-binding</keyword>
<keyword id="KW-0997">Cell inner membrane</keyword>
<keyword id="KW-1003">Cell membrane</keyword>
<keyword id="KW-0201">Cytochrome c-type biogenesis</keyword>
<keyword id="KW-0472">Membrane</keyword>
<keyword id="KW-0547">Nucleotide-binding</keyword>
<keyword id="KW-1278">Translocase</keyword>
<keyword id="KW-0813">Transport</keyword>
<dbReference type="EC" id="7.6.2.5" evidence="1"/>
<dbReference type="EMBL" id="CP000301">
    <property type="protein sequence ID" value="ABD85780.1"/>
    <property type="status" value="ALT_INIT"/>
    <property type="molecule type" value="Genomic_DNA"/>
</dbReference>
<dbReference type="SMR" id="Q21CV6"/>
<dbReference type="STRING" id="316056.RPC_0205"/>
<dbReference type="KEGG" id="rpc:RPC_0205"/>
<dbReference type="eggNOG" id="COG4133">
    <property type="taxonomic scope" value="Bacteria"/>
</dbReference>
<dbReference type="HOGENOM" id="CLU_000604_1_2_5"/>
<dbReference type="OrthoDB" id="9800654at2"/>
<dbReference type="GO" id="GO:0005886">
    <property type="term" value="C:plasma membrane"/>
    <property type="evidence" value="ECO:0007669"/>
    <property type="project" value="UniProtKB-SubCell"/>
</dbReference>
<dbReference type="GO" id="GO:0015439">
    <property type="term" value="F:ABC-type heme transporter activity"/>
    <property type="evidence" value="ECO:0007669"/>
    <property type="project" value="UniProtKB-EC"/>
</dbReference>
<dbReference type="GO" id="GO:0005524">
    <property type="term" value="F:ATP binding"/>
    <property type="evidence" value="ECO:0007669"/>
    <property type="project" value="UniProtKB-KW"/>
</dbReference>
<dbReference type="GO" id="GO:0016887">
    <property type="term" value="F:ATP hydrolysis activity"/>
    <property type="evidence" value="ECO:0007669"/>
    <property type="project" value="InterPro"/>
</dbReference>
<dbReference type="GO" id="GO:0017004">
    <property type="term" value="P:cytochrome complex assembly"/>
    <property type="evidence" value="ECO:0007669"/>
    <property type="project" value="UniProtKB-KW"/>
</dbReference>
<dbReference type="Gene3D" id="3.40.50.300">
    <property type="entry name" value="P-loop containing nucleotide triphosphate hydrolases"/>
    <property type="match status" value="1"/>
</dbReference>
<dbReference type="InterPro" id="IPR003593">
    <property type="entry name" value="AAA+_ATPase"/>
</dbReference>
<dbReference type="InterPro" id="IPR003439">
    <property type="entry name" value="ABC_transporter-like_ATP-bd"/>
</dbReference>
<dbReference type="InterPro" id="IPR017871">
    <property type="entry name" value="ABC_transporter-like_CS"/>
</dbReference>
<dbReference type="InterPro" id="IPR005895">
    <property type="entry name" value="ABC_transptr_haem_export_CcmA"/>
</dbReference>
<dbReference type="InterPro" id="IPR027417">
    <property type="entry name" value="P-loop_NTPase"/>
</dbReference>
<dbReference type="NCBIfam" id="TIGR01189">
    <property type="entry name" value="ccmA"/>
    <property type="match status" value="1"/>
</dbReference>
<dbReference type="PANTHER" id="PTHR43499">
    <property type="entry name" value="ABC TRANSPORTER I FAMILY MEMBER 1"/>
    <property type="match status" value="1"/>
</dbReference>
<dbReference type="PANTHER" id="PTHR43499:SF1">
    <property type="entry name" value="ABC TRANSPORTER I FAMILY MEMBER 1"/>
    <property type="match status" value="1"/>
</dbReference>
<dbReference type="Pfam" id="PF00005">
    <property type="entry name" value="ABC_tran"/>
    <property type="match status" value="1"/>
</dbReference>
<dbReference type="SMART" id="SM00382">
    <property type="entry name" value="AAA"/>
    <property type="match status" value="1"/>
</dbReference>
<dbReference type="SUPFAM" id="SSF52540">
    <property type="entry name" value="P-loop containing nucleoside triphosphate hydrolases"/>
    <property type="match status" value="1"/>
</dbReference>
<dbReference type="PROSITE" id="PS00211">
    <property type="entry name" value="ABC_TRANSPORTER_1"/>
    <property type="match status" value="1"/>
</dbReference>
<dbReference type="PROSITE" id="PS50893">
    <property type="entry name" value="ABC_TRANSPORTER_2"/>
    <property type="match status" value="1"/>
</dbReference>
<dbReference type="PROSITE" id="PS51243">
    <property type="entry name" value="CCMA"/>
    <property type="match status" value="1"/>
</dbReference>
<comment type="function">
    <text evidence="1">Part of the ABC transporter complex CcmAB involved in the biogenesis of c-type cytochromes; once thought to export heme, this seems not to be the case, but its exact role is uncertain. Responsible for energy coupling to the transport system.</text>
</comment>
<comment type="catalytic activity">
    <reaction evidence="1">
        <text>heme b(in) + ATP + H2O = heme b(out) + ADP + phosphate + H(+)</text>
        <dbReference type="Rhea" id="RHEA:19261"/>
        <dbReference type="ChEBI" id="CHEBI:15377"/>
        <dbReference type="ChEBI" id="CHEBI:15378"/>
        <dbReference type="ChEBI" id="CHEBI:30616"/>
        <dbReference type="ChEBI" id="CHEBI:43474"/>
        <dbReference type="ChEBI" id="CHEBI:60344"/>
        <dbReference type="ChEBI" id="CHEBI:456216"/>
        <dbReference type="EC" id="7.6.2.5"/>
    </reaction>
</comment>
<comment type="subunit">
    <text evidence="1">The complex is composed of two ATP-binding proteins (CcmA) and two transmembrane proteins (CcmB).</text>
</comment>
<comment type="subcellular location">
    <subcellularLocation>
        <location evidence="1">Cell inner membrane</location>
        <topology evidence="1">Peripheral membrane protein</topology>
    </subcellularLocation>
</comment>
<comment type="similarity">
    <text evidence="1">Belongs to the ABC transporter superfamily. CcmA exporter (TC 3.A.1.107) family.</text>
</comment>
<comment type="sequence caution" evidence="2">
    <conflict type="erroneous initiation">
        <sequence resource="EMBL-CDS" id="ABD85780"/>
    </conflict>
</comment>
<feature type="chain" id="PRO_0000271949" description="Cytochrome c biogenesis ATP-binding export protein CcmA">
    <location>
        <begin position="1"/>
        <end position="200"/>
    </location>
</feature>
<feature type="domain" description="ABC transporter" evidence="1">
    <location>
        <begin position="1"/>
        <end position="199"/>
    </location>
</feature>
<feature type="binding site" evidence="1">
    <location>
        <begin position="35"/>
        <end position="42"/>
    </location>
    <ligand>
        <name>ATP</name>
        <dbReference type="ChEBI" id="CHEBI:30616"/>
    </ligand>
</feature>
<evidence type="ECO:0000255" key="1">
    <source>
        <dbReference type="HAMAP-Rule" id="MF_01707"/>
    </source>
</evidence>
<evidence type="ECO:0000305" key="2"/>